<protein>
    <recommendedName>
        <fullName evidence="1">Acireductone dioxygenase</fullName>
    </recommendedName>
    <alternativeName>
        <fullName evidence="1">1,2-dihydroxy-3-keto-5-methylthiopentene dioxygenase</fullName>
        <shortName evidence="1">DHK-MTPene dioxygenase</shortName>
    </alternativeName>
    <alternativeName>
        <fullName evidence="1">Acireductone dioxygenase (Fe(2+)-requiring)</fullName>
        <shortName evidence="1">ARD'</shortName>
        <shortName evidence="1">Fe-ARD</shortName>
        <ecNumber evidence="1">1.13.11.54</ecNumber>
    </alternativeName>
    <alternativeName>
        <fullName evidence="1">Acireductone dioxygenase (Ni(2+)-requiring)</fullName>
        <shortName evidence="1">ARD</shortName>
        <shortName evidence="1">Ni-ARD</shortName>
        <ecNumber evidence="1">1.13.11.53</ecNumber>
    </alternativeName>
</protein>
<dbReference type="EC" id="1.13.11.54" evidence="1"/>
<dbReference type="EC" id="1.13.11.53" evidence="1"/>
<dbReference type="EMBL" id="CP000349">
    <property type="protein sequence ID" value="ABJ80544.1"/>
    <property type="molecule type" value="Genomic_DNA"/>
</dbReference>
<dbReference type="RefSeq" id="WP_011671397.1">
    <property type="nucleotide sequence ID" value="NC_008509.1"/>
</dbReference>
<dbReference type="SMR" id="Q04WK1"/>
<dbReference type="KEGG" id="lbl:LBL_4233"/>
<dbReference type="HOGENOM" id="CLU_125400_0_0_12"/>
<dbReference type="UniPathway" id="UPA00904">
    <property type="reaction ID" value="UER00878"/>
</dbReference>
<dbReference type="GO" id="GO:0010308">
    <property type="term" value="F:acireductone dioxygenase (Ni2+-requiring) activity"/>
    <property type="evidence" value="ECO:0007669"/>
    <property type="project" value="UniProtKB-UniRule"/>
</dbReference>
<dbReference type="GO" id="GO:0010309">
    <property type="term" value="F:acireductone dioxygenase [iron(II)-requiring] activity"/>
    <property type="evidence" value="ECO:0007669"/>
    <property type="project" value="UniProtKB-UniRule"/>
</dbReference>
<dbReference type="GO" id="GO:0005506">
    <property type="term" value="F:iron ion binding"/>
    <property type="evidence" value="ECO:0007669"/>
    <property type="project" value="UniProtKB-UniRule"/>
</dbReference>
<dbReference type="GO" id="GO:0016151">
    <property type="term" value="F:nickel cation binding"/>
    <property type="evidence" value="ECO:0007669"/>
    <property type="project" value="UniProtKB-UniRule"/>
</dbReference>
<dbReference type="GO" id="GO:0019509">
    <property type="term" value="P:L-methionine salvage from methylthioadenosine"/>
    <property type="evidence" value="ECO:0007669"/>
    <property type="project" value="UniProtKB-UniRule"/>
</dbReference>
<dbReference type="GO" id="GO:0019284">
    <property type="term" value="P:L-methionine salvage from S-adenosylmethionine"/>
    <property type="evidence" value="ECO:0007669"/>
    <property type="project" value="InterPro"/>
</dbReference>
<dbReference type="CDD" id="cd02232">
    <property type="entry name" value="cupin_ARD"/>
    <property type="match status" value="1"/>
</dbReference>
<dbReference type="Gene3D" id="2.60.120.10">
    <property type="entry name" value="Jelly Rolls"/>
    <property type="match status" value="1"/>
</dbReference>
<dbReference type="HAMAP" id="MF_01682">
    <property type="entry name" value="Salvage_MtnD"/>
    <property type="match status" value="1"/>
</dbReference>
<dbReference type="InterPro" id="IPR004313">
    <property type="entry name" value="ARD"/>
</dbReference>
<dbReference type="InterPro" id="IPR023956">
    <property type="entry name" value="ARD_bac"/>
</dbReference>
<dbReference type="InterPro" id="IPR014710">
    <property type="entry name" value="RmlC-like_jellyroll"/>
</dbReference>
<dbReference type="InterPro" id="IPR011051">
    <property type="entry name" value="RmlC_Cupin_sf"/>
</dbReference>
<dbReference type="PANTHER" id="PTHR23418">
    <property type="entry name" value="ACIREDUCTONE DIOXYGENASE"/>
    <property type="match status" value="1"/>
</dbReference>
<dbReference type="PANTHER" id="PTHR23418:SF0">
    <property type="entry name" value="ACIREDUCTONE DIOXYGENASE"/>
    <property type="match status" value="1"/>
</dbReference>
<dbReference type="Pfam" id="PF03079">
    <property type="entry name" value="ARD"/>
    <property type="match status" value="1"/>
</dbReference>
<dbReference type="SUPFAM" id="SSF51182">
    <property type="entry name" value="RmlC-like cupins"/>
    <property type="match status" value="1"/>
</dbReference>
<sequence>MATIVRQKGLAPIEETSEVKSFLKERGIDYDHWKVPYNAADLTDKEILADVEKEELLKKLDDRFETLKEKEGYQSRDLIVLHPNVSGLNDMLAKFDRVHYHTDEEVRYIVDGSGVFGFVLKGEKFLVHVVKDDFISVPRNTNHWFYLDDKKRIKAVRYFRDMSGWVPNYVEETNSLD</sequence>
<keyword id="KW-0028">Amino-acid biosynthesis</keyword>
<keyword id="KW-0223">Dioxygenase</keyword>
<keyword id="KW-0408">Iron</keyword>
<keyword id="KW-0479">Metal-binding</keyword>
<keyword id="KW-0486">Methionine biosynthesis</keyword>
<keyword id="KW-0533">Nickel</keyword>
<keyword id="KW-0560">Oxidoreductase</keyword>
<name>MTND_LEPBL</name>
<feature type="chain" id="PRO_0000359205" description="Acireductone dioxygenase">
    <location>
        <begin position="1"/>
        <end position="177"/>
    </location>
</feature>
<feature type="binding site" evidence="1">
    <location>
        <position position="99"/>
    </location>
    <ligand>
        <name>Fe(2+)</name>
        <dbReference type="ChEBI" id="CHEBI:29033"/>
    </ligand>
</feature>
<feature type="binding site" evidence="1">
    <location>
        <position position="99"/>
    </location>
    <ligand>
        <name>Ni(2+)</name>
        <dbReference type="ChEBI" id="CHEBI:49786"/>
    </ligand>
</feature>
<feature type="binding site" evidence="1">
    <location>
        <position position="101"/>
    </location>
    <ligand>
        <name>Fe(2+)</name>
        <dbReference type="ChEBI" id="CHEBI:29033"/>
    </ligand>
</feature>
<feature type="binding site" evidence="1">
    <location>
        <position position="101"/>
    </location>
    <ligand>
        <name>Ni(2+)</name>
        <dbReference type="ChEBI" id="CHEBI:49786"/>
    </ligand>
</feature>
<feature type="binding site" evidence="1">
    <location>
        <position position="105"/>
    </location>
    <ligand>
        <name>Fe(2+)</name>
        <dbReference type="ChEBI" id="CHEBI:29033"/>
    </ligand>
</feature>
<feature type="binding site" evidence="1">
    <location>
        <position position="105"/>
    </location>
    <ligand>
        <name>Ni(2+)</name>
        <dbReference type="ChEBI" id="CHEBI:49786"/>
    </ligand>
</feature>
<feature type="binding site" evidence="1">
    <location>
        <position position="143"/>
    </location>
    <ligand>
        <name>Fe(2+)</name>
        <dbReference type="ChEBI" id="CHEBI:29033"/>
    </ligand>
</feature>
<feature type="binding site" evidence="1">
    <location>
        <position position="143"/>
    </location>
    <ligand>
        <name>Ni(2+)</name>
        <dbReference type="ChEBI" id="CHEBI:49786"/>
    </ligand>
</feature>
<feature type="site" description="Important to generate the dianion" evidence="1">
    <location>
        <position position="107"/>
    </location>
</feature>
<proteinExistence type="inferred from homology"/>
<organism>
    <name type="scientific">Leptospira borgpetersenii serovar Hardjo-bovis (strain L550)</name>
    <dbReference type="NCBI Taxonomy" id="355276"/>
    <lineage>
        <taxon>Bacteria</taxon>
        <taxon>Pseudomonadati</taxon>
        <taxon>Spirochaetota</taxon>
        <taxon>Spirochaetia</taxon>
        <taxon>Leptospirales</taxon>
        <taxon>Leptospiraceae</taxon>
        <taxon>Leptospira</taxon>
    </lineage>
</organism>
<evidence type="ECO:0000255" key="1">
    <source>
        <dbReference type="HAMAP-Rule" id="MF_01682"/>
    </source>
</evidence>
<accession>Q04WK1</accession>
<reference key="1">
    <citation type="journal article" date="2006" name="Proc. Natl. Acad. Sci. U.S.A.">
        <title>Genome reduction in Leptospira borgpetersenii reflects limited transmission potential.</title>
        <authorList>
            <person name="Bulach D.M."/>
            <person name="Zuerner R.L."/>
            <person name="Wilson P."/>
            <person name="Seemann T."/>
            <person name="McGrath A."/>
            <person name="Cullen P.A."/>
            <person name="Davis J."/>
            <person name="Johnson M."/>
            <person name="Kuczek E."/>
            <person name="Alt D.P."/>
            <person name="Peterson-Burch B."/>
            <person name="Coppel R.L."/>
            <person name="Rood J.I."/>
            <person name="Davies J.K."/>
            <person name="Adler B."/>
        </authorList>
    </citation>
    <scope>NUCLEOTIDE SEQUENCE [LARGE SCALE GENOMIC DNA]</scope>
    <source>
        <strain>L550</strain>
    </source>
</reference>
<gene>
    <name evidence="1" type="primary">mtnD</name>
    <name type="ordered locus">LBL_4233</name>
</gene>
<comment type="function">
    <text evidence="1">Catalyzes 2 different reactions between oxygen and the acireductone 1,2-dihydroxy-3-keto-5-methylthiopentene (DHK-MTPene) depending upon the metal bound in the active site. Fe-containing acireductone dioxygenase (Fe-ARD) produces formate and 2-keto-4-methylthiobutyrate (KMTB), the alpha-ketoacid precursor of methionine in the methionine recycle pathway. Ni-containing acireductone dioxygenase (Ni-ARD) produces methylthiopropionate, carbon monoxide and formate, and does not lie on the methionine recycle pathway.</text>
</comment>
<comment type="catalytic activity">
    <reaction evidence="1">
        <text>1,2-dihydroxy-5-(methylsulfanyl)pent-1-en-3-one + O2 = 3-(methylsulfanyl)propanoate + CO + formate + 2 H(+)</text>
        <dbReference type="Rhea" id="RHEA:14161"/>
        <dbReference type="ChEBI" id="CHEBI:15378"/>
        <dbReference type="ChEBI" id="CHEBI:15379"/>
        <dbReference type="ChEBI" id="CHEBI:15740"/>
        <dbReference type="ChEBI" id="CHEBI:17245"/>
        <dbReference type="ChEBI" id="CHEBI:49016"/>
        <dbReference type="ChEBI" id="CHEBI:49252"/>
        <dbReference type="EC" id="1.13.11.53"/>
    </reaction>
</comment>
<comment type="catalytic activity">
    <reaction evidence="1">
        <text>1,2-dihydroxy-5-(methylsulfanyl)pent-1-en-3-one + O2 = 4-methylsulfanyl-2-oxobutanoate + formate + 2 H(+)</text>
        <dbReference type="Rhea" id="RHEA:24504"/>
        <dbReference type="ChEBI" id="CHEBI:15378"/>
        <dbReference type="ChEBI" id="CHEBI:15379"/>
        <dbReference type="ChEBI" id="CHEBI:15740"/>
        <dbReference type="ChEBI" id="CHEBI:16723"/>
        <dbReference type="ChEBI" id="CHEBI:49252"/>
        <dbReference type="EC" id="1.13.11.54"/>
    </reaction>
</comment>
<comment type="cofactor">
    <cofactor evidence="1">
        <name>Fe(2+)</name>
        <dbReference type="ChEBI" id="CHEBI:29033"/>
    </cofactor>
    <text evidence="1">Binds 1 Fe(2+) cation per monomer.</text>
</comment>
<comment type="cofactor">
    <cofactor evidence="1">
        <name>Ni(2+)</name>
        <dbReference type="ChEBI" id="CHEBI:49786"/>
    </cofactor>
    <text evidence="1">Binds 1 nickel ion per monomer.</text>
</comment>
<comment type="pathway">
    <text evidence="1">Amino-acid biosynthesis; L-methionine biosynthesis via salvage pathway; L-methionine from S-methyl-5-thio-alpha-D-ribose 1-phosphate: step 5/6.</text>
</comment>
<comment type="subunit">
    <text evidence="1">Monomer.</text>
</comment>
<comment type="similarity">
    <text evidence="1">Belongs to the acireductone dioxygenase (ARD) family.</text>
</comment>